<gene>
    <name evidence="19" type="primary">SDC1</name>
    <name type="synonym">SDC</name>
</gene>
<comment type="function">
    <text evidence="2 10">Cell surface proteoglycan that contains both heparan sulfate and chondroitin sulfate and that links the cytoskeleton to the interstitial matrix (By similarity). Regulates exosome biogenesis in concert with SDCBP and PDCD6IP (PubMed:22660413). Able to induce its own expression in dental mesenchymal cells and also in the neighboring dental epithelial cells via an MSX1-mediated pathway (By similarity).</text>
</comment>
<comment type="subunit">
    <text evidence="3 9 12">Interacts with CDCP1. Interacts (via C-terminus) with TIAM1 (via PDZ domain). Interacts with MDK (By similarity).</text>
</comment>
<comment type="interaction">
    <interactant intactId="EBI-2855248">
        <id>P18827</id>
    </interactant>
    <interactant intactId="EBI-77613">
        <id>P05067</id>
        <label>APP</label>
    </interactant>
    <organismsDiffer>false</organismsDiffer>
    <experiments>3</experiments>
</comment>
<comment type="interaction">
    <interactant intactId="EBI-2855248">
        <id>P18827</id>
    </interactant>
    <interactant intactId="EBI-2855248">
        <id>P18827</id>
        <label>SDC1</label>
    </interactant>
    <organismsDiffer>false</organismsDiffer>
    <experiments>2</experiments>
</comment>
<comment type="interaction">
    <interactant intactId="EBI-2855248">
        <id>P18827</id>
    </interactant>
    <interactant intactId="EBI-1172957">
        <id>P34741</id>
        <label>SDC2</label>
    </interactant>
    <organismsDiffer>false</organismsDiffer>
    <experiments>3</experiments>
</comment>
<comment type="interaction">
    <interactant intactId="EBI-2855248">
        <id>P18827</id>
    </interactant>
    <interactant intactId="EBI-1050007">
        <id>Q13009</id>
        <label>TIAM1</label>
    </interactant>
    <organismsDiffer>false</organismsDiffer>
    <experiments>5</experiments>
</comment>
<comment type="subcellular location">
    <subcellularLocation>
        <location evidence="4">Membrane</location>
        <topology evidence="4">Single-pass type I membrane protein</topology>
    </subcellularLocation>
    <subcellularLocation>
        <location evidence="16">Secreted</location>
    </subcellularLocation>
    <subcellularLocation>
        <location evidence="10">Secreted</location>
        <location evidence="10">Extracellular exosome</location>
    </subcellularLocation>
    <text evidence="16">Shedding of the ectodomain produces a soluble form.</text>
</comment>
<comment type="tissue specificity">
    <text evidence="13 14">Detected in placenta (at protein level) (PubMed:32337544). Detected in fibroblasts (at protein level) (PubMed:36213313).</text>
</comment>
<comment type="PTM">
    <text evidence="16">Shedding is enhanced by a number of factors such as heparanase, thrombin or EGF. Also by stress and wound healing. PMA-mediated shedding is inhibited by TIMP3.</text>
</comment>
<comment type="similarity">
    <text evidence="18">Belongs to the syndecan proteoglycan family.</text>
</comment>
<comment type="online information" name="Atlas of Genetics and Cytogenetics in Oncology and Haematology">
    <link uri="https://atlasgeneticsoncology.org/gene/42223/SDC1"/>
</comment>
<dbReference type="EMBL" id="X60306">
    <property type="protein sequence ID" value="CAA42851.1"/>
    <property type="molecule type" value="mRNA"/>
</dbReference>
<dbReference type="EMBL" id="J05392">
    <property type="protein sequence ID" value="AAA60605.1"/>
    <property type="molecule type" value="mRNA"/>
</dbReference>
<dbReference type="EMBL" id="AJ551176">
    <property type="protein sequence ID" value="CAD80245.1"/>
    <property type="molecule type" value="mRNA"/>
</dbReference>
<dbReference type="EMBL" id="AC104792">
    <property type="protein sequence ID" value="AAX93151.1"/>
    <property type="molecule type" value="Genomic_DNA"/>
</dbReference>
<dbReference type="EMBL" id="CH471053">
    <property type="protein sequence ID" value="EAX00828.1"/>
    <property type="molecule type" value="Genomic_DNA"/>
</dbReference>
<dbReference type="EMBL" id="CH471053">
    <property type="protein sequence ID" value="EAX00829.1"/>
    <property type="molecule type" value="Genomic_DNA"/>
</dbReference>
<dbReference type="EMBL" id="CH471053">
    <property type="protein sequence ID" value="EAX00830.1"/>
    <property type="molecule type" value="Genomic_DNA"/>
</dbReference>
<dbReference type="EMBL" id="CH471053">
    <property type="protein sequence ID" value="EAX00831.1"/>
    <property type="molecule type" value="Genomic_DNA"/>
</dbReference>
<dbReference type="EMBL" id="BC008765">
    <property type="protein sequence ID" value="AAH08765.1"/>
    <property type="molecule type" value="mRNA"/>
</dbReference>
<dbReference type="EMBL" id="Z48199">
    <property type="protein sequence ID" value="CAA88235.1"/>
    <property type="molecule type" value="Genomic_DNA"/>
</dbReference>
<dbReference type="CCDS" id="CCDS1697.1"/>
<dbReference type="PIR" id="A41776">
    <property type="entry name" value="A41776"/>
</dbReference>
<dbReference type="RefSeq" id="NP_001006947.2">
    <property type="nucleotide sequence ID" value="NM_001006946.2"/>
</dbReference>
<dbReference type="RefSeq" id="NP_002988.3">
    <property type="nucleotide sequence ID" value="NM_002997.4"/>
</dbReference>
<dbReference type="PDB" id="4GVC">
    <property type="method" value="X-ray"/>
    <property type="resolution" value="1.54 A"/>
    <property type="chains" value="B=303-310"/>
</dbReference>
<dbReference type="PDB" id="4GVD">
    <property type="method" value="X-ray"/>
    <property type="resolution" value="1.85 A"/>
    <property type="chains" value="C/D=303-310"/>
</dbReference>
<dbReference type="PDB" id="6EJE">
    <property type="method" value="X-ray"/>
    <property type="resolution" value="2.43 A"/>
    <property type="chains" value="B=201-212"/>
</dbReference>
<dbReference type="PDBsum" id="4GVC"/>
<dbReference type="PDBsum" id="4GVD"/>
<dbReference type="PDBsum" id="6EJE"/>
<dbReference type="SASBDB" id="P18827"/>
<dbReference type="SMR" id="P18827"/>
<dbReference type="BioGRID" id="112284">
    <property type="interactions" value="102"/>
</dbReference>
<dbReference type="ComplexPortal" id="CPX-3282">
    <property type="entry name" value="Syndecan-1-syntenin-1-ALIX complex"/>
</dbReference>
<dbReference type="CORUM" id="P18827"/>
<dbReference type="DIP" id="DIP-1123N"/>
<dbReference type="ELM" id="P18827"/>
<dbReference type="FunCoup" id="P18827">
    <property type="interactions" value="495"/>
</dbReference>
<dbReference type="IntAct" id="P18827">
    <property type="interactions" value="62"/>
</dbReference>
<dbReference type="MINT" id="P18827"/>
<dbReference type="STRING" id="9606.ENSP00000370542"/>
<dbReference type="ChEMBL" id="CHEMBL3712898"/>
<dbReference type="TCDB" id="9.A.35.1.2">
    <property type="family name" value="the peptide translocating syndecan (syndecan) family"/>
</dbReference>
<dbReference type="GlyCosmos" id="P18827">
    <property type="glycosylation" value="19 sites, 6 glycans"/>
</dbReference>
<dbReference type="GlyGen" id="P18827">
    <property type="glycosylation" value="48 sites, 8 O-linked glycans (43 sites)"/>
</dbReference>
<dbReference type="iPTMnet" id="P18827"/>
<dbReference type="PhosphoSitePlus" id="P18827"/>
<dbReference type="SwissPalm" id="P18827"/>
<dbReference type="BioMuta" id="SDC1"/>
<dbReference type="DMDM" id="229463011"/>
<dbReference type="jPOST" id="P18827"/>
<dbReference type="MassIVE" id="P18827"/>
<dbReference type="PaxDb" id="9606-ENSP00000370542"/>
<dbReference type="PeptideAtlas" id="P18827"/>
<dbReference type="ProteomicsDB" id="53609"/>
<dbReference type="Pumba" id="P18827"/>
<dbReference type="ABCD" id="P18827">
    <property type="antibodies" value="5 sequenced antibodies"/>
</dbReference>
<dbReference type="Antibodypedia" id="1489">
    <property type="antibodies" value="1676 antibodies from 53 providers"/>
</dbReference>
<dbReference type="DNASU" id="6382"/>
<dbReference type="Ensembl" id="ENST00000254351.9">
    <property type="protein sequence ID" value="ENSP00000254351.4"/>
    <property type="gene ID" value="ENSG00000115884.11"/>
</dbReference>
<dbReference type="Ensembl" id="ENST00000381150.5">
    <property type="protein sequence ID" value="ENSP00000370542.1"/>
    <property type="gene ID" value="ENSG00000115884.11"/>
</dbReference>
<dbReference type="GeneID" id="6382"/>
<dbReference type="KEGG" id="hsa:6382"/>
<dbReference type="MANE-Select" id="ENST00000254351.9">
    <property type="protein sequence ID" value="ENSP00000254351.4"/>
    <property type="RefSeq nucleotide sequence ID" value="NM_002997.5"/>
    <property type="RefSeq protein sequence ID" value="NP_002988.4"/>
</dbReference>
<dbReference type="UCSC" id="uc002rdo.2">
    <property type="organism name" value="human"/>
</dbReference>
<dbReference type="AGR" id="HGNC:10658"/>
<dbReference type="CTD" id="6382"/>
<dbReference type="DisGeNET" id="6382"/>
<dbReference type="GeneCards" id="SDC1"/>
<dbReference type="HGNC" id="HGNC:10658">
    <property type="gene designation" value="SDC1"/>
</dbReference>
<dbReference type="HPA" id="ENSG00000115884">
    <property type="expression patterns" value="Tissue enhanced (esophagus, liver, skin)"/>
</dbReference>
<dbReference type="MalaCards" id="SDC1"/>
<dbReference type="MIM" id="186355">
    <property type="type" value="gene"/>
</dbReference>
<dbReference type="neXtProt" id="NX_P18827"/>
<dbReference type="OpenTargets" id="ENSG00000115884"/>
<dbReference type="PharmGKB" id="PA35588"/>
<dbReference type="VEuPathDB" id="HostDB:ENSG00000115884"/>
<dbReference type="eggNOG" id="ENOG502RZWT">
    <property type="taxonomic scope" value="Eukaryota"/>
</dbReference>
<dbReference type="GeneTree" id="ENSGT00940000161171"/>
<dbReference type="HOGENOM" id="CLU_887201_0_0_1"/>
<dbReference type="InParanoid" id="P18827"/>
<dbReference type="OMA" id="VFCFQAV"/>
<dbReference type="OrthoDB" id="10044468at2759"/>
<dbReference type="PAN-GO" id="P18827">
    <property type="GO annotations" value="2 GO annotations based on evolutionary models"/>
</dbReference>
<dbReference type="PhylomeDB" id="P18827"/>
<dbReference type="TreeFam" id="TF320463"/>
<dbReference type="PathwayCommons" id="P18827"/>
<dbReference type="Reactome" id="R-HSA-1971475">
    <property type="pathway name" value="A tetrasaccharide linker sequence is required for GAG synthesis"/>
</dbReference>
<dbReference type="Reactome" id="R-HSA-2022928">
    <property type="pathway name" value="HS-GAG biosynthesis"/>
</dbReference>
<dbReference type="Reactome" id="R-HSA-2024096">
    <property type="pathway name" value="HS-GAG degradation"/>
</dbReference>
<dbReference type="Reactome" id="R-HSA-202733">
    <property type="pathway name" value="Cell surface interactions at the vascular wall"/>
</dbReference>
<dbReference type="Reactome" id="R-HSA-3000170">
    <property type="pathway name" value="Syndecan interactions"/>
</dbReference>
<dbReference type="Reactome" id="R-HSA-3560783">
    <property type="pathway name" value="Defective B4GALT7 causes EDS, progeroid type"/>
</dbReference>
<dbReference type="Reactome" id="R-HSA-3560801">
    <property type="pathway name" value="Defective B3GAT3 causes JDSSDHD"/>
</dbReference>
<dbReference type="Reactome" id="R-HSA-3656237">
    <property type="pathway name" value="Defective EXT2 causes exostoses 2"/>
</dbReference>
<dbReference type="Reactome" id="R-HSA-3656253">
    <property type="pathway name" value="Defective EXT1 causes exostoses 1, TRPS2 and CHDS"/>
</dbReference>
<dbReference type="Reactome" id="R-HSA-4420332">
    <property type="pathway name" value="Defective B3GALT6 causes EDSP2 and SEMDJL1"/>
</dbReference>
<dbReference type="Reactome" id="R-HSA-449836">
    <property type="pathway name" value="Other interleukin signaling"/>
</dbReference>
<dbReference type="Reactome" id="R-HSA-9694614">
    <property type="pathway name" value="Attachment and Entry"/>
</dbReference>
<dbReference type="Reactome" id="R-HSA-975634">
    <property type="pathway name" value="Retinoid metabolism and transport"/>
</dbReference>
<dbReference type="Reactome" id="R-HSA-9820960">
    <property type="pathway name" value="Respiratory syncytial virus (RSV) attachment and entry"/>
</dbReference>
<dbReference type="Reactome" id="R-HSA-9833110">
    <property type="pathway name" value="RSV-host interactions"/>
</dbReference>
<dbReference type="SignaLink" id="P18827"/>
<dbReference type="BioGRID-ORCS" id="6382">
    <property type="hits" value="269 hits in 1149 CRISPR screens"/>
</dbReference>
<dbReference type="ChiTaRS" id="SDC1">
    <property type="organism name" value="human"/>
</dbReference>
<dbReference type="EvolutionaryTrace" id="P18827"/>
<dbReference type="GeneWiki" id="Syndecan_1"/>
<dbReference type="GenomeRNAi" id="6382"/>
<dbReference type="Pharos" id="P18827">
    <property type="development level" value="Tbio"/>
</dbReference>
<dbReference type="PRO" id="PR:P18827"/>
<dbReference type="Proteomes" id="UP000005640">
    <property type="component" value="Chromosome 2"/>
</dbReference>
<dbReference type="RNAct" id="P18827">
    <property type="molecule type" value="protein"/>
</dbReference>
<dbReference type="Bgee" id="ENSG00000115884">
    <property type="expression patterns" value="Expressed in lower esophagus mucosa and 165 other cell types or tissues"/>
</dbReference>
<dbReference type="ExpressionAtlas" id="P18827">
    <property type="expression patterns" value="baseline and differential"/>
</dbReference>
<dbReference type="GO" id="GO:0009986">
    <property type="term" value="C:cell surface"/>
    <property type="evidence" value="ECO:0000314"/>
    <property type="project" value="UniProtKB"/>
</dbReference>
<dbReference type="GO" id="GO:0009897">
    <property type="term" value="C:external side of plasma membrane"/>
    <property type="evidence" value="ECO:0007669"/>
    <property type="project" value="Ensembl"/>
</dbReference>
<dbReference type="GO" id="GO:0070062">
    <property type="term" value="C:extracellular exosome"/>
    <property type="evidence" value="ECO:0007005"/>
    <property type="project" value="UniProtKB"/>
</dbReference>
<dbReference type="GO" id="GO:0005796">
    <property type="term" value="C:Golgi lumen"/>
    <property type="evidence" value="ECO:0000304"/>
    <property type="project" value="Reactome"/>
</dbReference>
<dbReference type="GO" id="GO:0043202">
    <property type="term" value="C:lysosomal lumen"/>
    <property type="evidence" value="ECO:0000304"/>
    <property type="project" value="Reactome"/>
</dbReference>
<dbReference type="GO" id="GO:0005886">
    <property type="term" value="C:plasma membrane"/>
    <property type="evidence" value="ECO:0000304"/>
    <property type="project" value="Reactome"/>
</dbReference>
<dbReference type="GO" id="GO:0038024">
    <property type="term" value="F:cargo receptor activity"/>
    <property type="evidence" value="ECO:0007669"/>
    <property type="project" value="Ensembl"/>
</dbReference>
<dbReference type="GO" id="GO:0042802">
    <property type="term" value="F:identical protein binding"/>
    <property type="evidence" value="ECO:0000353"/>
    <property type="project" value="IntAct"/>
</dbReference>
<dbReference type="GO" id="GO:0060070">
    <property type="term" value="P:canonical Wnt signaling pathway"/>
    <property type="evidence" value="ECO:0007669"/>
    <property type="project" value="Ensembl"/>
</dbReference>
<dbReference type="GO" id="GO:0016477">
    <property type="term" value="P:cell migration"/>
    <property type="evidence" value="ECO:0000318"/>
    <property type="project" value="GO_Central"/>
</dbReference>
<dbReference type="GO" id="GO:0048627">
    <property type="term" value="P:myoblast development"/>
    <property type="evidence" value="ECO:0000250"/>
    <property type="project" value="UniProtKB"/>
</dbReference>
<dbReference type="GO" id="GO:1903543">
    <property type="term" value="P:positive regulation of exosomal secretion"/>
    <property type="evidence" value="ECO:0000315"/>
    <property type="project" value="UniProtKB"/>
</dbReference>
<dbReference type="GO" id="GO:1903553">
    <property type="term" value="P:positive regulation of extracellular exosome assembly"/>
    <property type="evidence" value="ECO:0000315"/>
    <property type="project" value="UniProtKB"/>
</dbReference>
<dbReference type="GO" id="GO:0006898">
    <property type="term" value="P:receptor-mediated endocytosis"/>
    <property type="evidence" value="ECO:0007669"/>
    <property type="project" value="Ensembl"/>
</dbReference>
<dbReference type="GO" id="GO:0055002">
    <property type="term" value="P:striated muscle cell development"/>
    <property type="evidence" value="ECO:0000270"/>
    <property type="project" value="UniProtKB"/>
</dbReference>
<dbReference type="InterPro" id="IPR003585">
    <property type="entry name" value="Neurexin-like"/>
</dbReference>
<dbReference type="InterPro" id="IPR001050">
    <property type="entry name" value="Syndecan"/>
</dbReference>
<dbReference type="InterPro" id="IPR027789">
    <property type="entry name" value="Syndecan/Neurexin_dom"/>
</dbReference>
<dbReference type="InterPro" id="IPR030479">
    <property type="entry name" value="Syndecan_CS"/>
</dbReference>
<dbReference type="PANTHER" id="PTHR10915">
    <property type="entry name" value="SYNDECAN"/>
    <property type="match status" value="1"/>
</dbReference>
<dbReference type="PANTHER" id="PTHR10915:SF5">
    <property type="entry name" value="SYNDECAN-1"/>
    <property type="match status" value="1"/>
</dbReference>
<dbReference type="Pfam" id="PF01034">
    <property type="entry name" value="Syndecan"/>
    <property type="match status" value="1"/>
</dbReference>
<dbReference type="SMART" id="SM00294">
    <property type="entry name" value="4.1m"/>
    <property type="match status" value="1"/>
</dbReference>
<dbReference type="PROSITE" id="PS00964">
    <property type="entry name" value="SYNDECAN"/>
    <property type="match status" value="1"/>
</dbReference>
<reference key="1">
    <citation type="journal article" date="1992" name="J. Biol. Chem.">
        <title>Differential expression of cell surface heparan sulfate proteoglycans in human mammary epithelial cells and lung fibroblasts.</title>
        <authorList>
            <person name="Lories V."/>
            <person name="Cassiman J.-J."/>
            <person name="van de Berghe H."/>
            <person name="David G."/>
        </authorList>
    </citation>
    <scope>NUCLEOTIDE SEQUENCE [MRNA]</scope>
    <scope>VARIANT GLN-136</scope>
    <source>
        <tissue>Fibroblast</tissue>
    </source>
</reference>
<reference key="2">
    <citation type="journal article" date="1990" name="J. Biol. Chem.">
        <title>Sequence of human syndecan indicates a novel gene family of integral membrane proteoglycans.</title>
        <authorList>
            <person name="Mali M."/>
            <person name="Jaakkola P."/>
            <person name="Arvilommi A.-M."/>
            <person name="Jalkanen M."/>
        </authorList>
    </citation>
    <scope>NUCLEOTIDE SEQUENCE [MRNA]</scope>
    <scope>VARIANT GLN-136</scope>
    <source>
        <tissue>Mammary gland</tissue>
    </source>
</reference>
<reference key="3">
    <citation type="journal article" date="2004" name="Eur. J. Cancer">
        <title>Shift of syndecan-1 expression from epithelial to stromal cells during progression of solid tumours.</title>
        <authorList>
            <person name="Mennerich D."/>
            <person name="Vogel A."/>
            <person name="Klaman I."/>
            <person name="Dahl E."/>
            <person name="Lichtner R.B."/>
            <person name="Rosenthal A."/>
            <person name="Pohlenz H.D."/>
            <person name="Thierauch K.H."/>
            <person name="Sommer A."/>
        </authorList>
    </citation>
    <scope>NUCLEOTIDE SEQUENCE [MRNA]</scope>
    <scope>VARIANT GLN-136</scope>
</reference>
<reference key="4">
    <citation type="journal article" date="2005" name="Nature">
        <title>Generation and annotation of the DNA sequences of human chromosomes 2 and 4.</title>
        <authorList>
            <person name="Hillier L.W."/>
            <person name="Graves T.A."/>
            <person name="Fulton R.S."/>
            <person name="Fulton L.A."/>
            <person name="Pepin K.H."/>
            <person name="Minx P."/>
            <person name="Wagner-McPherson C."/>
            <person name="Layman D."/>
            <person name="Wylie K."/>
            <person name="Sekhon M."/>
            <person name="Becker M.C."/>
            <person name="Fewell G.A."/>
            <person name="Delehaunty K.D."/>
            <person name="Miner T.L."/>
            <person name="Nash W.E."/>
            <person name="Kremitzki C."/>
            <person name="Oddy L."/>
            <person name="Du H."/>
            <person name="Sun H."/>
            <person name="Bradshaw-Cordum H."/>
            <person name="Ali J."/>
            <person name="Carter J."/>
            <person name="Cordes M."/>
            <person name="Harris A."/>
            <person name="Isak A."/>
            <person name="van Brunt A."/>
            <person name="Nguyen C."/>
            <person name="Du F."/>
            <person name="Courtney L."/>
            <person name="Kalicki J."/>
            <person name="Ozersky P."/>
            <person name="Abbott S."/>
            <person name="Armstrong J."/>
            <person name="Belter E.A."/>
            <person name="Caruso L."/>
            <person name="Cedroni M."/>
            <person name="Cotton M."/>
            <person name="Davidson T."/>
            <person name="Desai A."/>
            <person name="Elliott G."/>
            <person name="Erb T."/>
            <person name="Fronick C."/>
            <person name="Gaige T."/>
            <person name="Haakenson W."/>
            <person name="Haglund K."/>
            <person name="Holmes A."/>
            <person name="Harkins R."/>
            <person name="Kim K."/>
            <person name="Kruchowski S.S."/>
            <person name="Strong C.M."/>
            <person name="Grewal N."/>
            <person name="Goyea E."/>
            <person name="Hou S."/>
            <person name="Levy A."/>
            <person name="Martinka S."/>
            <person name="Mead K."/>
            <person name="McLellan M.D."/>
            <person name="Meyer R."/>
            <person name="Randall-Maher J."/>
            <person name="Tomlinson C."/>
            <person name="Dauphin-Kohlberg S."/>
            <person name="Kozlowicz-Reilly A."/>
            <person name="Shah N."/>
            <person name="Swearengen-Shahid S."/>
            <person name="Snider J."/>
            <person name="Strong J.T."/>
            <person name="Thompson J."/>
            <person name="Yoakum M."/>
            <person name="Leonard S."/>
            <person name="Pearman C."/>
            <person name="Trani L."/>
            <person name="Radionenko M."/>
            <person name="Waligorski J.E."/>
            <person name="Wang C."/>
            <person name="Rock S.M."/>
            <person name="Tin-Wollam A.-M."/>
            <person name="Maupin R."/>
            <person name="Latreille P."/>
            <person name="Wendl M.C."/>
            <person name="Yang S.-P."/>
            <person name="Pohl C."/>
            <person name="Wallis J.W."/>
            <person name="Spieth J."/>
            <person name="Bieri T.A."/>
            <person name="Berkowicz N."/>
            <person name="Nelson J.O."/>
            <person name="Osborne J."/>
            <person name="Ding L."/>
            <person name="Meyer R."/>
            <person name="Sabo A."/>
            <person name="Shotland Y."/>
            <person name="Sinha P."/>
            <person name="Wohldmann P.E."/>
            <person name="Cook L.L."/>
            <person name="Hickenbotham M.T."/>
            <person name="Eldred J."/>
            <person name="Williams D."/>
            <person name="Jones T.A."/>
            <person name="She X."/>
            <person name="Ciccarelli F.D."/>
            <person name="Izaurralde E."/>
            <person name="Taylor J."/>
            <person name="Schmutz J."/>
            <person name="Myers R.M."/>
            <person name="Cox D.R."/>
            <person name="Huang X."/>
            <person name="McPherson J.D."/>
            <person name="Mardis E.R."/>
            <person name="Clifton S.W."/>
            <person name="Warren W.C."/>
            <person name="Chinwalla A.T."/>
            <person name="Eddy S.R."/>
            <person name="Marra M.A."/>
            <person name="Ovcharenko I."/>
            <person name="Furey T.S."/>
            <person name="Miller W."/>
            <person name="Eichler E.E."/>
            <person name="Bork P."/>
            <person name="Suyama M."/>
            <person name="Torrents D."/>
            <person name="Waterston R.H."/>
            <person name="Wilson R.K."/>
        </authorList>
    </citation>
    <scope>NUCLEOTIDE SEQUENCE [LARGE SCALE GENOMIC DNA]</scope>
</reference>
<reference key="5">
    <citation type="submission" date="2005-09" db="EMBL/GenBank/DDBJ databases">
        <authorList>
            <person name="Mural R.J."/>
            <person name="Istrail S."/>
            <person name="Sutton G.G."/>
            <person name="Florea L."/>
            <person name="Halpern A.L."/>
            <person name="Mobarry C.M."/>
            <person name="Lippert R."/>
            <person name="Walenz B."/>
            <person name="Shatkay H."/>
            <person name="Dew I."/>
            <person name="Miller J.R."/>
            <person name="Flanigan M.J."/>
            <person name="Edwards N.J."/>
            <person name="Bolanos R."/>
            <person name="Fasulo D."/>
            <person name="Halldorsson B.V."/>
            <person name="Hannenhalli S."/>
            <person name="Turner R."/>
            <person name="Yooseph S."/>
            <person name="Lu F."/>
            <person name="Nusskern D.R."/>
            <person name="Shue B.C."/>
            <person name="Zheng X.H."/>
            <person name="Zhong F."/>
            <person name="Delcher A.L."/>
            <person name="Huson D.H."/>
            <person name="Kravitz S.A."/>
            <person name="Mouchard L."/>
            <person name="Reinert K."/>
            <person name="Remington K.A."/>
            <person name="Clark A.G."/>
            <person name="Waterman M.S."/>
            <person name="Eichler E.E."/>
            <person name="Adams M.D."/>
            <person name="Hunkapiller M.W."/>
            <person name="Myers E.W."/>
            <person name="Venter J.C."/>
        </authorList>
    </citation>
    <scope>NUCLEOTIDE SEQUENCE [LARGE SCALE GENOMIC DNA]</scope>
    <scope>VARIANT GLN-136</scope>
</reference>
<reference key="6">
    <citation type="journal article" date="2004" name="Genome Res.">
        <title>The status, quality, and expansion of the NIH full-length cDNA project: the Mammalian Gene Collection (MGC).</title>
        <authorList>
            <consortium name="The MGC Project Team"/>
        </authorList>
    </citation>
    <scope>NUCLEOTIDE SEQUENCE [LARGE SCALE MRNA]</scope>
    <scope>VARIANT GLN-136</scope>
    <source>
        <tissue>Kidney</tissue>
    </source>
</reference>
<reference key="7">
    <citation type="journal article" date="1997" name="Hum. Genet.">
        <title>The mapping and visual ordering of the human syndecan-1 and N-myc genes near the telomeric region of chromosome 2p.</title>
        <authorList>
            <person name="Kaukonen J."/>
            <person name="Alanen-Kurki L."/>
            <person name="Jalkanen M."/>
            <person name="Palotie A."/>
        </authorList>
    </citation>
    <scope>NUCLEOTIDE SEQUENCE [GENOMIC DNA] OF 23-310</scope>
    <scope>VARIANT GLN-136</scope>
    <source>
        <tissue>Placenta</tissue>
    </source>
</reference>
<reference key="8">
    <citation type="journal article" date="1997" name="J. Biol. Chem.">
        <title>Regulated shedding of syndecan-1 and -4 ectodomains by thrombin and growth factor receptor activation.</title>
        <authorList>
            <person name="Subramanian S.V."/>
            <person name="Fitzgerald M.L."/>
            <person name="Bernfield M."/>
        </authorList>
    </citation>
    <scope>SHEDDING</scope>
    <scope>SUBCELLULAR LOCATION</scope>
</reference>
<reference key="9">
    <citation type="journal article" date="2005" name="Oncogene">
        <title>Adhesion signaling by a novel mitotic substrate of src kinases.</title>
        <authorList>
            <person name="Bhatt A.S."/>
            <person name="Erdjument-Bromage H."/>
            <person name="Tempst P."/>
            <person name="Craik C.S."/>
            <person name="Moasser M.M."/>
        </authorList>
    </citation>
    <scope>INTERACTION WITH CDCP1</scope>
</reference>
<reference key="10">
    <citation type="journal article" date="2011" name="BMC Syst. Biol.">
        <title>Initial characterization of the human central proteome.</title>
        <authorList>
            <person name="Burkard T.R."/>
            <person name="Planyavsky M."/>
            <person name="Kaupe I."/>
            <person name="Breitwieser F.P."/>
            <person name="Buerckstuemmer T."/>
            <person name="Bennett K.L."/>
            <person name="Superti-Furga G."/>
            <person name="Colinge J."/>
        </authorList>
    </citation>
    <scope>IDENTIFICATION BY MASS SPECTROMETRY [LARGE SCALE ANALYSIS]</scope>
</reference>
<reference key="11">
    <citation type="journal article" date="2012" name="Nat. Cell Biol.">
        <title>Syndecan-syntenin-ALIX regulates the biogenesis of exosomes.</title>
        <authorList>
            <person name="Baietti M.F."/>
            <person name="Zhang Z."/>
            <person name="Mortier E."/>
            <person name="Melchior A."/>
            <person name="Degeest G."/>
            <person name="Geeraerts A."/>
            <person name="Ivarsson Y."/>
            <person name="Depoortere F."/>
            <person name="Coomans C."/>
            <person name="Vermeiren E."/>
            <person name="Zimmermann P."/>
            <person name="David G."/>
        </authorList>
    </citation>
    <scope>FUNCTION</scope>
    <scope>SUBCELLULAR LOCATION</scope>
</reference>
<reference key="12">
    <citation type="journal article" date="2013" name="J. Proteome Res.">
        <title>Toward a comprehensive characterization of a human cancer cell phosphoproteome.</title>
        <authorList>
            <person name="Zhou H."/>
            <person name="Di Palma S."/>
            <person name="Preisinger C."/>
            <person name="Peng M."/>
            <person name="Polat A.N."/>
            <person name="Heck A.J."/>
            <person name="Mohammed S."/>
        </authorList>
    </citation>
    <scope>PHOSPHORYLATION [LARGE SCALE ANALYSIS] AT SER-285</scope>
    <scope>IDENTIFICATION BY MASS SPECTROMETRY [LARGE SCALE ANALYSIS]</scope>
    <source>
        <tissue>Cervix carcinoma</tissue>
    </source>
</reference>
<reference key="13">
    <citation type="journal article" date="2014" name="J. Proteomics">
        <title>An enzyme assisted RP-RPLC approach for in-depth analysis of human liver phosphoproteome.</title>
        <authorList>
            <person name="Bian Y."/>
            <person name="Song C."/>
            <person name="Cheng K."/>
            <person name="Dong M."/>
            <person name="Wang F."/>
            <person name="Huang J."/>
            <person name="Sun D."/>
            <person name="Wang L."/>
            <person name="Ye M."/>
            <person name="Zou H."/>
        </authorList>
    </citation>
    <scope>IDENTIFICATION BY MASS SPECTROMETRY [LARGE SCALE ANALYSIS]</scope>
    <source>
        <tissue>Liver</tissue>
    </source>
</reference>
<reference key="14">
    <citation type="journal article" date="2020" name="Glycobiology">
        <title>An affinity chromatography and glycoproteomics workflow to profile the chondroitin sulfate proteoglycans that interact with malarial VAR2CSA in the placenta and in cancer.</title>
        <authorList>
            <person name="Toledo A.G."/>
            <person name="Pihl J."/>
            <person name="Spliid C.B."/>
            <person name="Persson A."/>
            <person name="Nilsson J."/>
            <person name="Pereira M.A."/>
            <person name="Gustavsson T."/>
            <person name="Choudhary S."/>
            <person name="Oo H.Z."/>
            <person name="Black P.C."/>
            <person name="Daugaard M."/>
            <person name="Esko J.D."/>
            <person name="Larson G."/>
            <person name="Salanti A."/>
            <person name="Clausen T.M."/>
        </authorList>
    </citation>
    <scope>TISSUE SPECIFICITY</scope>
    <scope>GLYCOSYLATION AT SER-206</scope>
</reference>
<reference key="15">
    <citation type="journal article" date="2022" name="J. Proteins Proteom.">
        <title>Mass spectrometric analysis of chondroitin sulfate-linked peptides.</title>
        <authorList>
            <person name="Ramarajan M.G."/>
            <person name="Saraswat M."/>
            <person name="Budhraja R."/>
            <person name="Garapati K."/>
            <person name="Raymond K."/>
            <person name="Pandey A."/>
        </authorList>
    </citation>
    <scope>TISSUE SPECIFICITY</scope>
    <scope>GLYCOSYLATION AT SER-206</scope>
</reference>
<reference key="16">
    <citation type="journal article" date="2013" name="Structure">
        <title>The structure of the Tiam1 PDZ domain/ phospho-syndecan1 complex reveals a ligand conformation that modulates protein dynamics.</title>
        <authorList>
            <person name="Liu X."/>
            <person name="Shepherd T.R."/>
            <person name="Murray A.M."/>
            <person name="Xu Z."/>
            <person name="Fuentes E.J."/>
        </authorList>
    </citation>
    <scope>X-RAY CRYSTALLOGRAPHY (1.54 ANGSTROMS) OF 303-310 IN COMPLEX WITH TIAM1</scope>
    <scope>INTERACTION WITH TIAM1</scope>
</reference>
<proteinExistence type="evidence at protein level"/>
<evidence type="ECO:0000250" key="1"/>
<evidence type="ECO:0000250" key="2">
    <source>
        <dbReference type="UniProtKB" id="P18828"/>
    </source>
</evidence>
<evidence type="ECO:0000250" key="3">
    <source>
        <dbReference type="UniProtKB" id="P26260"/>
    </source>
</evidence>
<evidence type="ECO:0000255" key="4"/>
<evidence type="ECO:0000256" key="5">
    <source>
        <dbReference type="SAM" id="MobiDB-lite"/>
    </source>
</evidence>
<evidence type="ECO:0000269" key="6">
    <source>
    </source>
</evidence>
<evidence type="ECO:0000269" key="7">
    <source>
    </source>
</evidence>
<evidence type="ECO:0000269" key="8">
    <source>
    </source>
</evidence>
<evidence type="ECO:0000269" key="9">
    <source>
    </source>
</evidence>
<evidence type="ECO:0000269" key="10">
    <source>
    </source>
</evidence>
<evidence type="ECO:0000269" key="11">
    <source>
    </source>
</evidence>
<evidence type="ECO:0000269" key="12">
    <source>
    </source>
</evidence>
<evidence type="ECO:0000269" key="13">
    <source>
    </source>
</evidence>
<evidence type="ECO:0000269" key="14">
    <source>
    </source>
</evidence>
<evidence type="ECO:0000269" key="15">
    <source>
    </source>
</evidence>
<evidence type="ECO:0000269" key="16">
    <source>
    </source>
</evidence>
<evidence type="ECO:0000269" key="17">
    <source ref="5"/>
</evidence>
<evidence type="ECO:0000305" key="18"/>
<evidence type="ECO:0000312" key="19">
    <source>
        <dbReference type="HGNC" id="HGNC:10658"/>
    </source>
</evidence>
<evidence type="ECO:0007744" key="20">
    <source>
    </source>
</evidence>
<evidence type="ECO:0007829" key="21">
    <source>
        <dbReference type="PDB" id="4GVC"/>
    </source>
</evidence>
<keyword id="KW-0002">3D-structure</keyword>
<keyword id="KW-0325">Glycoprotein</keyword>
<keyword id="KW-0357">Heparan sulfate</keyword>
<keyword id="KW-0472">Membrane</keyword>
<keyword id="KW-0597">Phosphoprotein</keyword>
<keyword id="KW-0654">Proteoglycan</keyword>
<keyword id="KW-1267">Proteomics identification</keyword>
<keyword id="KW-1185">Reference proteome</keyword>
<keyword id="KW-0964">Secreted</keyword>
<keyword id="KW-0732">Signal</keyword>
<keyword id="KW-0812">Transmembrane</keyword>
<keyword id="KW-1133">Transmembrane helix</keyword>
<feature type="signal peptide" evidence="4">
    <location>
        <begin position="1"/>
        <end position="22"/>
    </location>
</feature>
<feature type="chain" id="PRO_0000033499" description="Syndecan-1">
    <location>
        <begin position="23"/>
        <end position="310"/>
    </location>
</feature>
<feature type="topological domain" description="Extracellular" evidence="4">
    <location>
        <begin position="23"/>
        <end position="254"/>
    </location>
</feature>
<feature type="transmembrane region" description="Helical" evidence="4">
    <location>
        <begin position="255"/>
        <end position="275"/>
    </location>
</feature>
<feature type="topological domain" description="Cytoplasmic" evidence="4">
    <location>
        <begin position="276"/>
        <end position="310"/>
    </location>
</feature>
<feature type="region of interest" description="Disordered" evidence="5">
    <location>
        <begin position="27"/>
        <end position="100"/>
    </location>
</feature>
<feature type="region of interest" description="Disordered" evidence="5">
    <location>
        <begin position="114"/>
        <end position="212"/>
    </location>
</feature>
<feature type="region of interest" description="Disordered" evidence="5">
    <location>
        <begin position="284"/>
        <end position="310"/>
    </location>
</feature>
<feature type="compositionally biased region" description="Acidic residues" evidence="5">
    <location>
        <begin position="32"/>
        <end position="42"/>
    </location>
</feature>
<feature type="compositionally biased region" description="Polar residues" evidence="5">
    <location>
        <begin position="55"/>
        <end position="75"/>
    </location>
</feature>
<feature type="compositionally biased region" description="Basic and acidic residues" evidence="5">
    <location>
        <begin position="117"/>
        <end position="127"/>
    </location>
</feature>
<feature type="compositionally biased region" description="Low complexity" evidence="5">
    <location>
        <begin position="128"/>
        <end position="151"/>
    </location>
</feature>
<feature type="compositionally biased region" description="Basic and acidic residues" evidence="5">
    <location>
        <begin position="153"/>
        <end position="164"/>
    </location>
</feature>
<feature type="site" description="Cleavage" evidence="1">
    <location>
        <begin position="242"/>
        <end position="243"/>
    </location>
</feature>
<feature type="modified residue" description="Phosphoserine" evidence="20">
    <location>
        <position position="285"/>
    </location>
</feature>
<feature type="glycosylation site" description="O-linked (Xyl...) (chondroitin sulfate) serine" evidence="2">
    <location>
        <position position="37"/>
    </location>
</feature>
<feature type="glycosylation site" description="N-linked (GlcNAc...) asparagine" evidence="4">
    <location>
        <position position="43"/>
    </location>
</feature>
<feature type="glycosylation site" description="O-linked (Xyl...) (heparan sulfate) serine" evidence="1">
    <location>
        <position position="45"/>
    </location>
</feature>
<feature type="glycosylation site" description="O-linked (Xyl...) (heparan sulfate) serine" evidence="1">
    <location>
        <position position="47"/>
    </location>
</feature>
<feature type="glycosylation site" description="O-linked (Xyl...) (chondroitin sulfate) serine" evidence="13 14">
    <location>
        <position position="206"/>
    </location>
</feature>
<feature type="glycosylation site" description="O-linked (Xyl...) (chondroitin sulfate) serine" evidence="2">
    <location>
        <position position="216"/>
    </location>
</feature>
<feature type="sequence variant" id="VAR_052242" description="In dbSNP:rs2230922.">
    <original>T</original>
    <variation>M</variation>
    <location>
        <position position="76"/>
    </location>
</feature>
<feature type="sequence variant" id="VAR_052243" description="In dbSNP:rs10205485." evidence="6 7 8 11 15 17">
    <original>L</original>
    <variation>Q</variation>
    <location>
        <position position="136"/>
    </location>
</feature>
<feature type="sequence conflict" description="In Ref. 2; AAA60605." evidence="18" ref="2">
    <original>P</original>
    <variation>L</variation>
    <location>
        <position position="19"/>
    </location>
</feature>
<feature type="sequence conflict" description="In Ref. 6; AAH08765." evidence="18" ref="6">
    <original>G</original>
    <variation>V</variation>
    <location>
        <position position="259"/>
    </location>
</feature>
<feature type="strand" evidence="21">
    <location>
        <begin position="305"/>
        <end position="309"/>
    </location>
</feature>
<name>SDC1_HUMAN</name>
<accession>P18827</accession>
<accession>D6W523</accession>
<accession>Q53QV0</accession>
<accession>Q546D3</accession>
<accession>Q96HB7</accession>
<protein>
    <recommendedName>
        <fullName evidence="19">Syndecan-1</fullName>
        <shortName evidence="19">SYND1</shortName>
    </recommendedName>
    <cdAntigenName>CD138</cdAntigenName>
</protein>
<organism>
    <name type="scientific">Homo sapiens</name>
    <name type="common">Human</name>
    <dbReference type="NCBI Taxonomy" id="9606"/>
    <lineage>
        <taxon>Eukaryota</taxon>
        <taxon>Metazoa</taxon>
        <taxon>Chordata</taxon>
        <taxon>Craniata</taxon>
        <taxon>Vertebrata</taxon>
        <taxon>Euteleostomi</taxon>
        <taxon>Mammalia</taxon>
        <taxon>Eutheria</taxon>
        <taxon>Euarchontoglires</taxon>
        <taxon>Primates</taxon>
        <taxon>Haplorrhini</taxon>
        <taxon>Catarrhini</taxon>
        <taxon>Hominidae</taxon>
        <taxon>Homo</taxon>
    </lineage>
</organism>
<sequence>MRRAALWLWLCALALSLQPALPQIVATNLPPEDQDGSGDDSDNFSGSGAGALQDITLSQQTPSTWKDTQLLTAIPTSPEPTGLEATAASTSTLPAGEGPKEGEAVVLPEVEPGLTAREQEATPRPRETTQLPTTHLASTTTATTAQEPATSHPHRDMQPGHHETSTPAGPSQADLHTPHTEDGGPSATERAAEDGASSQLPAAEGSGEQDFTFETSGENTAVVAVEPDRRNQSPVDQGATGASQGLLDRKEVLGGVIAGGLVGLIFAVCLVGFMLYRMKKKDEGSYSLEEPKQANGGAYQKPTKQEEFYA</sequence>